<feature type="chain" id="PRO_0000289023" description="Putative HMP/thiamine permease protein YkoE">
    <location>
        <begin position="1"/>
        <end position="199"/>
    </location>
</feature>
<feature type="transmembrane region" description="Helical" evidence="1">
    <location>
        <begin position="9"/>
        <end position="29"/>
    </location>
</feature>
<feature type="transmembrane region" description="Helical" evidence="1">
    <location>
        <begin position="40"/>
        <end position="60"/>
    </location>
</feature>
<feature type="transmembrane region" description="Helical" evidence="1">
    <location>
        <begin position="63"/>
        <end position="83"/>
    </location>
</feature>
<feature type="transmembrane region" description="Helical" evidence="1">
    <location>
        <begin position="85"/>
        <end position="105"/>
    </location>
</feature>
<feature type="transmembrane region" description="Helical" evidence="1">
    <location>
        <begin position="114"/>
        <end position="134"/>
    </location>
</feature>
<feature type="transmembrane region" description="Helical" evidence="1">
    <location>
        <begin position="143"/>
        <end position="163"/>
    </location>
</feature>
<feature type="sequence conflict" description="In Ref. 1; CAA05602." evidence="2" ref="1">
    <original>D</original>
    <variation>G</variation>
    <location>
        <position position="169"/>
    </location>
</feature>
<feature type="helix" evidence="5">
    <location>
        <begin position="6"/>
        <end position="37"/>
    </location>
</feature>
<feature type="helix" evidence="5">
    <location>
        <begin position="39"/>
        <end position="50"/>
    </location>
</feature>
<feature type="helix" evidence="5">
    <location>
        <begin position="51"/>
        <end position="60"/>
    </location>
</feature>
<feature type="helix" evidence="5">
    <location>
        <begin position="65"/>
        <end position="79"/>
    </location>
</feature>
<feature type="turn" evidence="5">
    <location>
        <begin position="83"/>
        <end position="86"/>
    </location>
</feature>
<feature type="helix" evidence="5">
    <location>
        <begin position="87"/>
        <end position="105"/>
    </location>
</feature>
<feature type="turn" evidence="5">
    <location>
        <begin position="106"/>
        <end position="108"/>
    </location>
</feature>
<feature type="helix" evidence="5">
    <location>
        <begin position="113"/>
        <end position="134"/>
    </location>
</feature>
<feature type="helix" evidence="5">
    <location>
        <begin position="137"/>
        <end position="139"/>
    </location>
</feature>
<feature type="helix" evidence="5">
    <location>
        <begin position="142"/>
        <end position="159"/>
    </location>
</feature>
<feature type="helix" evidence="5">
    <location>
        <begin position="161"/>
        <end position="172"/>
    </location>
</feature>
<feature type="turn" evidence="5">
    <location>
        <begin position="173"/>
        <end position="179"/>
    </location>
</feature>
<feature type="helix" evidence="5">
    <location>
        <begin position="181"/>
        <end position="194"/>
    </location>
</feature>
<name>YKOE_BACSU</name>
<dbReference type="EMBL" id="AJ002571">
    <property type="protein sequence ID" value="CAA05602.1"/>
    <property type="molecule type" value="Genomic_DNA"/>
</dbReference>
<dbReference type="EMBL" id="AL009126">
    <property type="protein sequence ID" value="CAB13180.2"/>
    <property type="molecule type" value="Genomic_DNA"/>
</dbReference>
<dbReference type="PIR" id="A69859">
    <property type="entry name" value="A69859"/>
</dbReference>
<dbReference type="RefSeq" id="WP_003232554.1">
    <property type="nucleotide sequence ID" value="NZ_OZ025638.1"/>
</dbReference>
<dbReference type="PDB" id="5EDL">
    <property type="method" value="X-ray"/>
    <property type="resolution" value="1.95 A"/>
    <property type="chains" value="A=3-199"/>
</dbReference>
<dbReference type="PDBsum" id="5EDL"/>
<dbReference type="SMR" id="O34738"/>
<dbReference type="FunCoup" id="O34738">
    <property type="interactions" value="28"/>
</dbReference>
<dbReference type="STRING" id="224308.BSU13230"/>
<dbReference type="TCDB" id="3.A.1.30.1">
    <property type="family name" value="the atp-binding cassette (abc) superfamily"/>
</dbReference>
<dbReference type="PaxDb" id="224308-BSU13230"/>
<dbReference type="EnsemblBacteria" id="CAB13180">
    <property type="protein sequence ID" value="CAB13180"/>
    <property type="gene ID" value="BSU_13230"/>
</dbReference>
<dbReference type="GeneID" id="939829"/>
<dbReference type="KEGG" id="bsu:BSU13230"/>
<dbReference type="PATRIC" id="fig|224308.179.peg.1437"/>
<dbReference type="eggNOG" id="COG4721">
    <property type="taxonomic scope" value="Bacteria"/>
</dbReference>
<dbReference type="InParanoid" id="O34738"/>
<dbReference type="OrthoDB" id="8017424at2"/>
<dbReference type="PhylomeDB" id="O34738"/>
<dbReference type="BioCyc" id="BSUB:BSU13230-MONOMER"/>
<dbReference type="Proteomes" id="UP000001570">
    <property type="component" value="Chromosome"/>
</dbReference>
<dbReference type="GO" id="GO:0005886">
    <property type="term" value="C:plasma membrane"/>
    <property type="evidence" value="ECO:0007669"/>
    <property type="project" value="UniProtKB-SubCell"/>
</dbReference>
<dbReference type="InterPro" id="IPR017195">
    <property type="entry name" value="ABC_thiamin-permease_prd"/>
</dbReference>
<dbReference type="Pfam" id="PF09819">
    <property type="entry name" value="ABC_cobalt"/>
    <property type="match status" value="1"/>
</dbReference>
<dbReference type="PIRSF" id="PIRSF037394">
    <property type="entry name" value="ABC_thiamine-permease_YkoE_prd"/>
    <property type="match status" value="1"/>
</dbReference>
<reference key="1">
    <citation type="submission" date="1997-11" db="EMBL/GenBank/DDBJ databases">
        <title>Sequence of the Bacillus subtilis genome between xlyA and ykoR.</title>
        <authorList>
            <person name="Devine K.M."/>
        </authorList>
    </citation>
    <scope>NUCLEOTIDE SEQUENCE [GENOMIC DNA]</scope>
    <source>
        <strain>168</strain>
    </source>
</reference>
<reference key="2">
    <citation type="journal article" date="1997" name="Nature">
        <title>The complete genome sequence of the Gram-positive bacterium Bacillus subtilis.</title>
        <authorList>
            <person name="Kunst F."/>
            <person name="Ogasawara N."/>
            <person name="Moszer I."/>
            <person name="Albertini A.M."/>
            <person name="Alloni G."/>
            <person name="Azevedo V."/>
            <person name="Bertero M.G."/>
            <person name="Bessieres P."/>
            <person name="Bolotin A."/>
            <person name="Borchert S."/>
            <person name="Borriss R."/>
            <person name="Boursier L."/>
            <person name="Brans A."/>
            <person name="Braun M."/>
            <person name="Brignell S.C."/>
            <person name="Bron S."/>
            <person name="Brouillet S."/>
            <person name="Bruschi C.V."/>
            <person name="Caldwell B."/>
            <person name="Capuano V."/>
            <person name="Carter N.M."/>
            <person name="Choi S.-K."/>
            <person name="Codani J.-J."/>
            <person name="Connerton I.F."/>
            <person name="Cummings N.J."/>
            <person name="Daniel R.A."/>
            <person name="Denizot F."/>
            <person name="Devine K.M."/>
            <person name="Duesterhoeft A."/>
            <person name="Ehrlich S.D."/>
            <person name="Emmerson P.T."/>
            <person name="Entian K.-D."/>
            <person name="Errington J."/>
            <person name="Fabret C."/>
            <person name="Ferrari E."/>
            <person name="Foulger D."/>
            <person name="Fritz C."/>
            <person name="Fujita M."/>
            <person name="Fujita Y."/>
            <person name="Fuma S."/>
            <person name="Galizzi A."/>
            <person name="Galleron N."/>
            <person name="Ghim S.-Y."/>
            <person name="Glaser P."/>
            <person name="Goffeau A."/>
            <person name="Golightly E.J."/>
            <person name="Grandi G."/>
            <person name="Guiseppi G."/>
            <person name="Guy B.J."/>
            <person name="Haga K."/>
            <person name="Haiech J."/>
            <person name="Harwood C.R."/>
            <person name="Henaut A."/>
            <person name="Hilbert H."/>
            <person name="Holsappel S."/>
            <person name="Hosono S."/>
            <person name="Hullo M.-F."/>
            <person name="Itaya M."/>
            <person name="Jones L.-M."/>
            <person name="Joris B."/>
            <person name="Karamata D."/>
            <person name="Kasahara Y."/>
            <person name="Klaerr-Blanchard M."/>
            <person name="Klein C."/>
            <person name="Kobayashi Y."/>
            <person name="Koetter P."/>
            <person name="Koningstein G."/>
            <person name="Krogh S."/>
            <person name="Kumano M."/>
            <person name="Kurita K."/>
            <person name="Lapidus A."/>
            <person name="Lardinois S."/>
            <person name="Lauber J."/>
            <person name="Lazarevic V."/>
            <person name="Lee S.-M."/>
            <person name="Levine A."/>
            <person name="Liu H."/>
            <person name="Masuda S."/>
            <person name="Mauel C."/>
            <person name="Medigue C."/>
            <person name="Medina N."/>
            <person name="Mellado R.P."/>
            <person name="Mizuno M."/>
            <person name="Moestl D."/>
            <person name="Nakai S."/>
            <person name="Noback M."/>
            <person name="Noone D."/>
            <person name="O'Reilly M."/>
            <person name="Ogawa K."/>
            <person name="Ogiwara A."/>
            <person name="Oudega B."/>
            <person name="Park S.-H."/>
            <person name="Parro V."/>
            <person name="Pohl T.M."/>
            <person name="Portetelle D."/>
            <person name="Porwollik S."/>
            <person name="Prescott A.M."/>
            <person name="Presecan E."/>
            <person name="Pujic P."/>
            <person name="Purnelle B."/>
            <person name="Rapoport G."/>
            <person name="Rey M."/>
            <person name="Reynolds S."/>
            <person name="Rieger M."/>
            <person name="Rivolta C."/>
            <person name="Rocha E."/>
            <person name="Roche B."/>
            <person name="Rose M."/>
            <person name="Sadaie Y."/>
            <person name="Sato T."/>
            <person name="Scanlan E."/>
            <person name="Schleich S."/>
            <person name="Schroeter R."/>
            <person name="Scoffone F."/>
            <person name="Sekiguchi J."/>
            <person name="Sekowska A."/>
            <person name="Seror S.J."/>
            <person name="Serror P."/>
            <person name="Shin B.-S."/>
            <person name="Soldo B."/>
            <person name="Sorokin A."/>
            <person name="Tacconi E."/>
            <person name="Takagi T."/>
            <person name="Takahashi H."/>
            <person name="Takemaru K."/>
            <person name="Takeuchi M."/>
            <person name="Tamakoshi A."/>
            <person name="Tanaka T."/>
            <person name="Terpstra P."/>
            <person name="Tognoni A."/>
            <person name="Tosato V."/>
            <person name="Uchiyama S."/>
            <person name="Vandenbol M."/>
            <person name="Vannier F."/>
            <person name="Vassarotti A."/>
            <person name="Viari A."/>
            <person name="Wambutt R."/>
            <person name="Wedler E."/>
            <person name="Wedler H."/>
            <person name="Weitzenegger T."/>
            <person name="Winters P."/>
            <person name="Wipat A."/>
            <person name="Yamamoto H."/>
            <person name="Yamane K."/>
            <person name="Yasumoto K."/>
            <person name="Yata K."/>
            <person name="Yoshida K."/>
            <person name="Yoshikawa H.-F."/>
            <person name="Zumstein E."/>
            <person name="Yoshikawa H."/>
            <person name="Danchin A."/>
        </authorList>
    </citation>
    <scope>NUCLEOTIDE SEQUENCE [LARGE SCALE GENOMIC DNA]</scope>
    <source>
        <strain>168</strain>
    </source>
</reference>
<reference key="3">
    <citation type="journal article" date="2009" name="Microbiology">
        <title>From a consortium sequence to a unified sequence: the Bacillus subtilis 168 reference genome a decade later.</title>
        <authorList>
            <person name="Barbe V."/>
            <person name="Cruveiller S."/>
            <person name="Kunst F."/>
            <person name="Lenoble P."/>
            <person name="Meurice G."/>
            <person name="Sekowska A."/>
            <person name="Vallenet D."/>
            <person name="Wang T."/>
            <person name="Moszer I."/>
            <person name="Medigue C."/>
            <person name="Danchin A."/>
        </authorList>
    </citation>
    <scope>SEQUENCE REVISION TO 169</scope>
</reference>
<reference key="4">
    <citation type="journal article" date="2002" name="J. Biol. Chem.">
        <title>Comparative genomics of thiamin biosynthesis in procaryotes. New genes and regulatory mechanisms.</title>
        <authorList>
            <person name="Rodionov D.A."/>
            <person name="Vitreschak A.G."/>
            <person name="Mironov A.A."/>
            <person name="Gelfand M.S."/>
        </authorList>
    </citation>
    <scope>FUNCTION IN HMP TRANSPORT</scope>
</reference>
<reference key="5">
    <citation type="journal article" date="2005" name="J. Bacteriol.">
        <title>Isolation and characterization of new thiamine-deregulated mutants of Bacillus subtilis.</title>
        <authorList>
            <person name="Schyns G."/>
            <person name="Potot S."/>
            <person name="Geng Y."/>
            <person name="Barbosa T.M."/>
            <person name="Henriques A."/>
            <person name="Perkins J.B."/>
        </authorList>
    </citation>
    <scope>FUNCTION IN HMP/THIAMINE TRANSPORT</scope>
    <source>
        <strain>168 / PY79</strain>
    </source>
</reference>
<accession>O34738</accession>
<accession>Q796L8</accession>
<keyword id="KW-0002">3D-structure</keyword>
<keyword id="KW-1003">Cell membrane</keyword>
<keyword id="KW-0472">Membrane</keyword>
<keyword id="KW-1185">Reference proteome</keyword>
<keyword id="KW-0812">Transmembrane</keyword>
<keyword id="KW-1133">Transmembrane helix</keyword>
<keyword id="KW-0813">Transport</keyword>
<sequence length="199" mass="21224">MKSWKVKEIVIMSVISIVFAVVYLLFTHFGNVLAGMFGPIAYEPIYGIWFIVSVIAAYMIRKPGAALVSEIIAALVECLLGNPSGPMVIVIGIVQGLGAEAVFLATRWKAYSLPVLMLAGMGSSVASFIYDLFVSGYAAYSPGYLLIMLVIRLISGALLAGLLGKAVSDSLAYTGVLNGMALGKELKKKRKRASEHASL</sequence>
<gene>
    <name type="primary">ykoE</name>
    <name type="ordered locus">BSU13230</name>
</gene>
<proteinExistence type="evidence at protein level"/>
<evidence type="ECO:0000255" key="1"/>
<evidence type="ECO:0000305" key="2"/>
<evidence type="ECO:0000305" key="3">
    <source>
    </source>
</evidence>
<evidence type="ECO:0000305" key="4">
    <source>
    </source>
</evidence>
<evidence type="ECO:0007829" key="5">
    <source>
        <dbReference type="PDB" id="5EDL"/>
    </source>
</evidence>
<protein>
    <recommendedName>
        <fullName>Putative HMP/thiamine permease protein YkoE</fullName>
    </recommendedName>
</protein>
<comment type="function">
    <text evidence="3 4">Part of the ABC transporter complex YkoCDEF that could transport hydroxymethylpyrimidine (HMP) and/or thiamine. Could also transport other HMP-containing products. Probably responsible for the translocation of the substrate across the membrane (Probable).</text>
</comment>
<comment type="subunit">
    <text evidence="2">The complex is composed of two ATP-binding proteins (YkoD), two transmembrane proteins (YkoC and YkoE) and a solute-binding protein (YkoF).</text>
</comment>
<comment type="subcellular location">
    <subcellularLocation>
        <location evidence="2">Cell membrane</location>
        <topology evidence="2">Multi-pass membrane protein</topology>
    </subcellularLocation>
</comment>
<organism>
    <name type="scientific">Bacillus subtilis (strain 168)</name>
    <dbReference type="NCBI Taxonomy" id="224308"/>
    <lineage>
        <taxon>Bacteria</taxon>
        <taxon>Bacillati</taxon>
        <taxon>Bacillota</taxon>
        <taxon>Bacilli</taxon>
        <taxon>Bacillales</taxon>
        <taxon>Bacillaceae</taxon>
        <taxon>Bacillus</taxon>
    </lineage>
</organism>